<sequence length="276" mass="29713">MTWHARLQLDYRREGPRTVAGFLHDGPLRILQSLYPEGGGICHNVLVHPPGGLVGGDTLDIAATVAPGAHGLVTTPGATRFYRSTGAPALQRTQATLAAGARLEWLPLEALCYSACQAENRLTLSLSPGAECIAWDVTALGLPHSGQPFATGRFTQHIEVPGIWLERGTIDAADGLLMDGRLGLAGHRCLASVFFVAGEALPRERREAALDAARAVIDAHALRETAGATSPHPQVVVVRVLAPVVEPAMELLRRAWGAWREHLWGLQPRQPRIWAM</sequence>
<protein>
    <recommendedName>
        <fullName evidence="1">Urease accessory protein UreD</fullName>
    </recommendedName>
</protein>
<reference key="1">
    <citation type="submission" date="2006-12" db="EMBL/GenBank/DDBJ databases">
        <title>Complete sequence of Acidovorax avenae subsp. citrulli AAC00-1.</title>
        <authorList>
            <person name="Copeland A."/>
            <person name="Lucas S."/>
            <person name="Lapidus A."/>
            <person name="Barry K."/>
            <person name="Detter J.C."/>
            <person name="Glavina del Rio T."/>
            <person name="Dalin E."/>
            <person name="Tice H."/>
            <person name="Pitluck S."/>
            <person name="Kiss H."/>
            <person name="Brettin T."/>
            <person name="Bruce D."/>
            <person name="Han C."/>
            <person name="Tapia R."/>
            <person name="Gilna P."/>
            <person name="Schmutz J."/>
            <person name="Larimer F."/>
            <person name="Land M."/>
            <person name="Hauser L."/>
            <person name="Kyrpides N."/>
            <person name="Kim E."/>
            <person name="Stahl D."/>
            <person name="Richardson P."/>
        </authorList>
    </citation>
    <scope>NUCLEOTIDE SEQUENCE [LARGE SCALE GENOMIC DNA]</scope>
    <source>
        <strain>AAC00-1</strain>
    </source>
</reference>
<dbReference type="EMBL" id="CP000512">
    <property type="protein sequence ID" value="ABM31678.1"/>
    <property type="molecule type" value="Genomic_DNA"/>
</dbReference>
<dbReference type="RefSeq" id="WP_011794234.1">
    <property type="nucleotide sequence ID" value="NC_008752.1"/>
</dbReference>
<dbReference type="SMR" id="A1TL40"/>
<dbReference type="STRING" id="397945.Aave_1082"/>
<dbReference type="GeneID" id="79790736"/>
<dbReference type="KEGG" id="aav:Aave_1082"/>
<dbReference type="eggNOG" id="COG0829">
    <property type="taxonomic scope" value="Bacteria"/>
</dbReference>
<dbReference type="HOGENOM" id="CLU_056339_0_0_4"/>
<dbReference type="OrthoDB" id="9798842at2"/>
<dbReference type="Proteomes" id="UP000002596">
    <property type="component" value="Chromosome"/>
</dbReference>
<dbReference type="GO" id="GO:0005737">
    <property type="term" value="C:cytoplasm"/>
    <property type="evidence" value="ECO:0007669"/>
    <property type="project" value="UniProtKB-SubCell"/>
</dbReference>
<dbReference type="GO" id="GO:0016151">
    <property type="term" value="F:nickel cation binding"/>
    <property type="evidence" value="ECO:0007669"/>
    <property type="project" value="UniProtKB-UniRule"/>
</dbReference>
<dbReference type="HAMAP" id="MF_01384">
    <property type="entry name" value="UreD"/>
    <property type="match status" value="1"/>
</dbReference>
<dbReference type="InterPro" id="IPR002669">
    <property type="entry name" value="UreD"/>
</dbReference>
<dbReference type="PANTHER" id="PTHR33643">
    <property type="entry name" value="UREASE ACCESSORY PROTEIN D"/>
    <property type="match status" value="1"/>
</dbReference>
<dbReference type="PANTHER" id="PTHR33643:SF1">
    <property type="entry name" value="UREASE ACCESSORY PROTEIN D"/>
    <property type="match status" value="1"/>
</dbReference>
<dbReference type="Pfam" id="PF01774">
    <property type="entry name" value="UreD"/>
    <property type="match status" value="1"/>
</dbReference>
<comment type="function">
    <text evidence="1">Required for maturation of urease via the functional incorporation of the urease nickel metallocenter.</text>
</comment>
<comment type="subunit">
    <text evidence="1">UreD, UreF and UreG form a complex that acts as a GTP-hydrolysis-dependent molecular chaperone, activating the urease apoprotein by helping to assemble the nickel containing metallocenter of UreC. The UreE protein probably delivers the nickel.</text>
</comment>
<comment type="subcellular location">
    <subcellularLocation>
        <location evidence="1">Cytoplasm</location>
    </subcellularLocation>
</comment>
<comment type="similarity">
    <text evidence="1">Belongs to the UreD family.</text>
</comment>
<keyword id="KW-0143">Chaperone</keyword>
<keyword id="KW-0963">Cytoplasm</keyword>
<keyword id="KW-0996">Nickel insertion</keyword>
<organism>
    <name type="scientific">Paracidovorax citrulli (strain AAC00-1)</name>
    <name type="common">Acidovorax citrulli</name>
    <dbReference type="NCBI Taxonomy" id="397945"/>
    <lineage>
        <taxon>Bacteria</taxon>
        <taxon>Pseudomonadati</taxon>
        <taxon>Pseudomonadota</taxon>
        <taxon>Betaproteobacteria</taxon>
        <taxon>Burkholderiales</taxon>
        <taxon>Comamonadaceae</taxon>
        <taxon>Paracidovorax</taxon>
    </lineage>
</organism>
<gene>
    <name evidence="1" type="primary">ureD</name>
    <name type="ordered locus">Aave_1082</name>
</gene>
<name>URED_PARC0</name>
<accession>A1TL40</accession>
<feature type="chain" id="PRO_0000340398" description="Urease accessory protein UreD">
    <location>
        <begin position="1"/>
        <end position="276"/>
    </location>
</feature>
<evidence type="ECO:0000255" key="1">
    <source>
        <dbReference type="HAMAP-Rule" id="MF_01384"/>
    </source>
</evidence>
<proteinExistence type="inferred from homology"/>